<gene>
    <name type="primary">SOCS4</name>
    <name type="synonym">SOCS7</name>
</gene>
<feature type="chain" id="PRO_0000181247" description="Suppressor of cytokine signaling 4">
    <location>
        <begin position="1"/>
        <end position="440"/>
    </location>
</feature>
<feature type="domain" description="SH2" evidence="2">
    <location>
        <begin position="286"/>
        <end position="381"/>
    </location>
</feature>
<feature type="domain" description="SOCS box" evidence="3">
    <location>
        <begin position="376"/>
        <end position="425"/>
    </location>
</feature>
<feature type="region of interest" description="Disordered" evidence="4">
    <location>
        <begin position="1"/>
        <end position="29"/>
    </location>
</feature>
<feature type="compositionally biased region" description="Polar residues" evidence="4">
    <location>
        <begin position="1"/>
        <end position="10"/>
    </location>
</feature>
<feature type="compositionally biased region" description="Basic and acidic residues" evidence="4">
    <location>
        <begin position="12"/>
        <end position="29"/>
    </location>
</feature>
<feature type="helix" evidence="7">
    <location>
        <begin position="278"/>
        <end position="283"/>
    </location>
</feature>
<feature type="strand" evidence="7">
    <location>
        <begin position="287"/>
        <end position="290"/>
    </location>
</feature>
<feature type="helix" evidence="7">
    <location>
        <begin position="293"/>
        <end position="300"/>
    </location>
</feature>
<feature type="strand" evidence="7">
    <location>
        <begin position="307"/>
        <end position="312"/>
    </location>
</feature>
<feature type="strand" evidence="7">
    <location>
        <begin position="319"/>
        <end position="326"/>
    </location>
</feature>
<feature type="strand" evidence="7">
    <location>
        <begin position="329"/>
        <end position="334"/>
    </location>
</feature>
<feature type="strand" evidence="7">
    <location>
        <begin position="336"/>
        <end position="338"/>
    </location>
</feature>
<feature type="strand" evidence="7">
    <location>
        <begin position="341"/>
        <end position="344"/>
    </location>
</feature>
<feature type="strand" evidence="7">
    <location>
        <begin position="354"/>
        <end position="356"/>
    </location>
</feature>
<feature type="helix" evidence="7">
    <location>
        <begin position="357"/>
        <end position="363"/>
    </location>
</feature>
<feature type="helix" evidence="7">
    <location>
        <begin position="367"/>
        <end position="369"/>
    </location>
</feature>
<feature type="helix" evidence="7">
    <location>
        <begin position="389"/>
        <end position="400"/>
    </location>
</feature>
<feature type="helix" evidence="7">
    <location>
        <begin position="403"/>
        <end position="407"/>
    </location>
</feature>
<feature type="strand" evidence="7">
    <location>
        <begin position="409"/>
        <end position="411"/>
    </location>
</feature>
<feature type="helix" evidence="7">
    <location>
        <begin position="413"/>
        <end position="419"/>
    </location>
</feature>
<feature type="strand" evidence="7">
    <location>
        <begin position="421"/>
        <end position="426"/>
    </location>
</feature>
<evidence type="ECO:0000250" key="1"/>
<evidence type="ECO:0000255" key="2">
    <source>
        <dbReference type="PROSITE-ProRule" id="PRU00191"/>
    </source>
</evidence>
<evidence type="ECO:0000255" key="3">
    <source>
        <dbReference type="PROSITE-ProRule" id="PRU00194"/>
    </source>
</evidence>
<evidence type="ECO:0000256" key="4">
    <source>
        <dbReference type="SAM" id="MobiDB-lite"/>
    </source>
</evidence>
<evidence type="ECO:0000269" key="5">
    <source>
    </source>
</evidence>
<evidence type="ECO:0000269" key="6">
    <source>
    </source>
</evidence>
<evidence type="ECO:0007829" key="7">
    <source>
        <dbReference type="PDB" id="2IZV"/>
    </source>
</evidence>
<sequence>MAENNENISKNVDVRPKTSRSRSADRKDGYVWSGKKLSWSKKSESYSDAETVNGIEKTEVSLRNQERKHSCSSIELDLDHSCGHRFLGRSLKQKLQDAVGQCFPIKNCSSRHSSGLPSKRKIHISELMLDKCPFPPRSDLAFRWHFIKRHTAPINSKSDEWVSTDLSQTELRDGQLKRRNMEENINCFSHTNVQPCVITTDNALCREGPMTGSVMNLVSNNSIEDSDMDSDDEILTLCTSSRKRNKPKWDLDDEILQLETPPKYHTQIDYVHCLVPDLLQINNNPCYWGVMDKYAAEALLEGKPEGTFLLRDSAQEDYLFSVSFRRYSRSLHARIEQWNHNFSFDAHDPCVFHSPDITGLLEHYKDPSACMFFEPLLSTPLIRTFPFSLQHICRTVICNCTTYDGIDALPIPSSMKLYLKEYHYKSKVRVLRIDAPEQQC</sequence>
<organism>
    <name type="scientific">Homo sapiens</name>
    <name type="common">Human</name>
    <dbReference type="NCBI Taxonomy" id="9606"/>
    <lineage>
        <taxon>Eukaryota</taxon>
        <taxon>Metazoa</taxon>
        <taxon>Chordata</taxon>
        <taxon>Craniata</taxon>
        <taxon>Vertebrata</taxon>
        <taxon>Euteleostomi</taxon>
        <taxon>Mammalia</taxon>
        <taxon>Eutheria</taxon>
        <taxon>Euarchontoglires</taxon>
        <taxon>Primates</taxon>
        <taxon>Haplorrhini</taxon>
        <taxon>Catarrhini</taxon>
        <taxon>Hominidae</taxon>
        <taxon>Homo</taxon>
    </lineage>
</organism>
<reference key="1">
    <citation type="submission" date="2001-09" db="EMBL/GenBank/DDBJ databases">
        <authorList>
            <person name="Hilton D.J."/>
            <person name="Alexander W.S."/>
            <person name="Nicola N.A."/>
        </authorList>
    </citation>
    <scope>NUCLEOTIDE SEQUENCE [MRNA]</scope>
</reference>
<reference key="2">
    <citation type="journal article" date="2004" name="Genome Res.">
        <title>The status, quality, and expansion of the NIH full-length cDNA project: the Mammalian Gene Collection (MGC).</title>
        <authorList>
            <consortium name="The MGC Project Team"/>
        </authorList>
    </citation>
    <scope>NUCLEOTIDE SEQUENCE [LARGE SCALE MRNA]</scope>
    <source>
        <tissue>Placenta</tissue>
    </source>
</reference>
<reference key="3">
    <citation type="journal article" date="2005" name="J. Biol. Chem.">
        <title>Suppressors of cytokine signaling 4 and 5 regulate epidermal growth factor receptor signaling.</title>
        <authorList>
            <person name="Kario E."/>
            <person name="Marmor M.D."/>
            <person name="Adamsky K."/>
            <person name="Citri A."/>
            <person name="Amit I."/>
            <person name="Amariglio N."/>
            <person name="Rechavi G."/>
            <person name="Yarden Y."/>
        </authorList>
    </citation>
    <scope>FUNCTION IN EGF SIGNALING</scope>
    <scope>INDUCTION BY EGF</scope>
</reference>
<reference key="4">
    <citation type="journal article" date="2007" name="Structure">
        <title>Structure of the SOCS4-ElonginB/C complex reveals a distinct SOCS box interface and the molecular basis for SOCS-dependent EGFR degradation.</title>
        <authorList>
            <person name="Bullock A.N."/>
            <person name="Rodriguez M.C."/>
            <person name="Debreczeni J.E."/>
            <person name="Songyang Z."/>
            <person name="Knapp S."/>
        </authorList>
    </citation>
    <scope>X-RAY CRYSTALLOGRAPHY (2.55 ANGSTROMS) OF 274-437 IN COMPLEX WITH ELONGINS ELOB AND ELOC</scope>
    <scope>FUNCTION</scope>
    <scope>SUBUNIT</scope>
</reference>
<proteinExistence type="evidence at protein level"/>
<comment type="function">
    <text evidence="5 6">SOCS family proteins form part of a classical negative feedback system that regulates cytokine signal transduction. Substrate-recognition component of a SCF-like ECS (Elongin BC-CUL2/5-SOCS-box protein) E3 ubiquitin-protein ligase complex which mediates the ubiquitination and subsequent proteasomal degradation of target proteins. Inhibits EGF signaling by mediating the degradation of the Tyr-phosphorylated EGF receptor/EGFR.</text>
</comment>
<comment type="pathway">
    <text>Protein modification; protein ubiquitination.</text>
</comment>
<comment type="interaction">
    <interactant intactId="EBI-3942425">
        <id>Q8WXH5</id>
    </interactant>
    <interactant intactId="EBI-11532900">
        <id>J3KQ12</id>
        <label>BSCL2</label>
    </interactant>
    <organismsDiffer>false</organismsDiffer>
    <experiments>3</experiments>
</comment>
<comment type="interaction">
    <interactant intactId="EBI-3942425">
        <id>Q8WXH5</id>
    </interactant>
    <interactant intactId="EBI-10976677">
        <id>G5E9A7</id>
        <label>DMWD</label>
    </interactant>
    <organismsDiffer>false</organismsDiffer>
    <experiments>3</experiments>
</comment>
<comment type="interaction">
    <interactant intactId="EBI-3942425">
        <id>Q8WXH5</id>
    </interactant>
    <interactant intactId="EBI-725515">
        <id>O43559</id>
        <label>FRS3</label>
    </interactant>
    <organismsDiffer>false</organismsDiffer>
    <experiments>2</experiments>
</comment>
<comment type="interaction">
    <interactant intactId="EBI-3942425">
        <id>Q8WXH5</id>
    </interactant>
    <interactant intactId="EBI-724143">
        <id>P41250</id>
        <label>GARS1</label>
    </interactant>
    <organismsDiffer>false</organismsDiffer>
    <experiments>3</experiments>
</comment>
<comment type="interaction">
    <interactant intactId="EBI-3942425">
        <id>Q8WXH5</id>
    </interactant>
    <interactant intactId="EBI-401755">
        <id>P62993</id>
        <label>GRB2</label>
    </interactant>
    <organismsDiffer>false</organismsDiffer>
    <experiments>3</experiments>
</comment>
<comment type="interaction">
    <interactant intactId="EBI-3942425">
        <id>Q8WXH5</id>
    </interactant>
    <interactant intactId="EBI-517086">
        <id>O43464</id>
        <label>HTRA2</label>
    </interactant>
    <organismsDiffer>false</organismsDiffer>
    <experiments>3</experiments>
</comment>
<comment type="interaction">
    <interactant intactId="EBI-3942425">
        <id>Q8WXH5</id>
    </interactant>
    <interactant intactId="EBI-466029">
        <id>P42858</id>
        <label>HTT</label>
    </interactant>
    <organismsDiffer>false</organismsDiffer>
    <experiments>3</experiments>
</comment>
<comment type="interaction">
    <interactant intactId="EBI-3942425">
        <id>Q8WXH5</id>
    </interactant>
    <interactant intactId="EBI-1055254">
        <id>Q8WXH2</id>
        <label>JPH3</label>
    </interactant>
    <organismsDiffer>false</organismsDiffer>
    <experiments>3</experiments>
</comment>
<comment type="interaction">
    <interactant intactId="EBI-3942425">
        <id>Q8WXH5</id>
    </interactant>
    <interactant intactId="EBI-25929070">
        <id>Q9BZ23-2</id>
        <label>PANK2</label>
    </interactant>
    <organismsDiffer>false</organismsDiffer>
    <experiments>3</experiments>
</comment>
<comment type="interaction">
    <interactant intactId="EBI-3942425">
        <id>Q8WXH5</id>
    </interactant>
    <interactant intactId="EBI-79893">
        <id>Q92569</id>
        <label>PIK3R3</label>
    </interactant>
    <organismsDiffer>false</organismsDiffer>
    <experiments>3</experiments>
</comment>
<comment type="interaction">
    <interactant intactId="EBI-3942425">
        <id>Q8WXH5</id>
    </interactant>
    <interactant intactId="EBI-2846068">
        <id>Q9BXM7</id>
        <label>PINK1</label>
    </interactant>
    <organismsDiffer>false</organismsDiffer>
    <experiments>3</experiments>
</comment>
<comment type="interaction">
    <interactant intactId="EBI-3942425">
        <id>Q8WXH5</id>
    </interactant>
    <interactant intactId="EBI-2856326">
        <id>Q96R05</id>
        <label>RBP7</label>
    </interactant>
    <organismsDiffer>false</organismsDiffer>
    <experiments>3</experiments>
</comment>
<comment type="interaction">
    <interactant intactId="EBI-3942425">
        <id>Q8WXH5</id>
    </interactant>
    <interactant intactId="EBI-5235340">
        <id>Q7Z699</id>
        <label>SPRED1</label>
    </interactant>
    <organismsDiffer>false</organismsDiffer>
    <experiments>3</experiments>
</comment>
<comment type="interaction">
    <interactant intactId="EBI-3942425">
        <id>Q8WXH5</id>
    </interactant>
    <interactant intactId="EBI-25912901">
        <id>O15269-2</id>
        <label>SPTLC1</label>
    </interactant>
    <organismsDiffer>false</organismsDiffer>
    <experiments>3</experiments>
</comment>
<comment type="interaction">
    <interactant intactId="EBI-3942425">
        <id>Q8WXH5</id>
    </interactant>
    <interactant intactId="EBI-750487">
        <id>Q8WW24</id>
        <label>TEKT4</label>
    </interactant>
    <organismsDiffer>false</organismsDiffer>
    <experiments>3</experiments>
</comment>
<comment type="induction">
    <text evidence="5">Up-regulated by EGF.</text>
</comment>
<comment type="domain">
    <text evidence="1">The SOCS box domain mediates the interaction with the Elongin BC complex, an adapter module in different E3 ubiquitin ligase complexes.</text>
</comment>
<accession>Q8WXH5</accession>
<dbReference type="EMBL" id="AF424815">
    <property type="protein sequence ID" value="AAL60517.1"/>
    <property type="molecule type" value="mRNA"/>
</dbReference>
<dbReference type="EMBL" id="BC060790">
    <property type="protein sequence ID" value="AAH60790.1"/>
    <property type="molecule type" value="mRNA"/>
</dbReference>
<dbReference type="CCDS" id="CCDS9722.1"/>
<dbReference type="RefSeq" id="NP_543143.1">
    <property type="nucleotide sequence ID" value="NM_080867.3"/>
</dbReference>
<dbReference type="RefSeq" id="NP_955453.1">
    <property type="nucleotide sequence ID" value="NM_199421.2"/>
</dbReference>
<dbReference type="RefSeq" id="XP_011534727.1">
    <property type="nucleotide sequence ID" value="XM_011536425.2"/>
</dbReference>
<dbReference type="RefSeq" id="XP_011534728.1">
    <property type="nucleotide sequence ID" value="XM_011536426.2"/>
</dbReference>
<dbReference type="RefSeq" id="XP_054231367.1">
    <property type="nucleotide sequence ID" value="XM_054375392.1"/>
</dbReference>
<dbReference type="RefSeq" id="XP_054231368.1">
    <property type="nucleotide sequence ID" value="XM_054375393.1"/>
</dbReference>
<dbReference type="PDB" id="2IZV">
    <property type="method" value="X-ray"/>
    <property type="resolution" value="2.55 A"/>
    <property type="chains" value="A=274-437"/>
</dbReference>
<dbReference type="PDBsum" id="2IZV"/>
<dbReference type="SMR" id="Q8WXH5"/>
<dbReference type="BioGRID" id="125796">
    <property type="interactions" value="24"/>
</dbReference>
<dbReference type="DIP" id="DIP-29568N"/>
<dbReference type="FunCoup" id="Q8WXH5">
    <property type="interactions" value="467"/>
</dbReference>
<dbReference type="IntAct" id="Q8WXH5">
    <property type="interactions" value="28"/>
</dbReference>
<dbReference type="MINT" id="Q8WXH5"/>
<dbReference type="STRING" id="9606.ENSP00000452522"/>
<dbReference type="iPTMnet" id="Q8WXH5"/>
<dbReference type="PhosphoSitePlus" id="Q8WXH5"/>
<dbReference type="BioMuta" id="SOCS4"/>
<dbReference type="DMDM" id="20178106"/>
<dbReference type="MassIVE" id="Q8WXH5"/>
<dbReference type="PaxDb" id="9606-ENSP00000378855"/>
<dbReference type="PeptideAtlas" id="Q8WXH5"/>
<dbReference type="ProteomicsDB" id="75057"/>
<dbReference type="Antibodypedia" id="4604">
    <property type="antibodies" value="294 antibodies from 33 providers"/>
</dbReference>
<dbReference type="DNASU" id="122809"/>
<dbReference type="Ensembl" id="ENST00000339298.2">
    <property type="protein sequence ID" value="ENSP00000341327.2"/>
    <property type="gene ID" value="ENSG00000180008.9"/>
</dbReference>
<dbReference type="Ensembl" id="ENST00000395472.2">
    <property type="protein sequence ID" value="ENSP00000378855.2"/>
    <property type="gene ID" value="ENSG00000180008.9"/>
</dbReference>
<dbReference type="Ensembl" id="ENST00000555846.2">
    <property type="protein sequence ID" value="ENSP00000452522.1"/>
    <property type="gene ID" value="ENSG00000180008.9"/>
</dbReference>
<dbReference type="GeneID" id="122809"/>
<dbReference type="KEGG" id="hsa:122809"/>
<dbReference type="MANE-Select" id="ENST00000555846.2">
    <property type="protein sequence ID" value="ENSP00000452522.1"/>
    <property type="RefSeq nucleotide sequence ID" value="NM_199421.2"/>
    <property type="RefSeq protein sequence ID" value="NP_955453.1"/>
</dbReference>
<dbReference type="UCSC" id="uc001xbo.4">
    <property type="organism name" value="human"/>
</dbReference>
<dbReference type="AGR" id="HGNC:19392"/>
<dbReference type="CTD" id="122809"/>
<dbReference type="DisGeNET" id="122809"/>
<dbReference type="GeneCards" id="SOCS4"/>
<dbReference type="HGNC" id="HGNC:19392">
    <property type="gene designation" value="SOCS4"/>
</dbReference>
<dbReference type="HPA" id="ENSG00000180008">
    <property type="expression patterns" value="Low tissue specificity"/>
</dbReference>
<dbReference type="MIM" id="616337">
    <property type="type" value="gene"/>
</dbReference>
<dbReference type="neXtProt" id="NX_Q8WXH5"/>
<dbReference type="OpenTargets" id="ENSG00000180008"/>
<dbReference type="PharmGKB" id="PA164742477"/>
<dbReference type="VEuPathDB" id="HostDB:ENSG00000180008"/>
<dbReference type="eggNOG" id="KOG4566">
    <property type="taxonomic scope" value="Eukaryota"/>
</dbReference>
<dbReference type="GeneTree" id="ENSGT00940000161456"/>
<dbReference type="HOGENOM" id="CLU_035609_0_0_1"/>
<dbReference type="InParanoid" id="Q8WXH5"/>
<dbReference type="OMA" id="RINNNPC"/>
<dbReference type="OrthoDB" id="8820570at2759"/>
<dbReference type="PAN-GO" id="Q8WXH5">
    <property type="GO annotations" value="3 GO annotations based on evolutionary models"/>
</dbReference>
<dbReference type="PhylomeDB" id="Q8WXH5"/>
<dbReference type="TreeFam" id="TF321368"/>
<dbReference type="PathwayCommons" id="Q8WXH5"/>
<dbReference type="Reactome" id="R-HSA-8939242">
    <property type="pathway name" value="RUNX1 regulates transcription of genes involved in differentiation of keratinocytes"/>
</dbReference>
<dbReference type="SignaLink" id="Q8WXH5"/>
<dbReference type="SIGNOR" id="Q8WXH5"/>
<dbReference type="UniPathway" id="UPA00143"/>
<dbReference type="BioGRID-ORCS" id="122809">
    <property type="hits" value="11 hits in 1187 CRISPR screens"/>
</dbReference>
<dbReference type="ChiTaRS" id="SOCS4">
    <property type="organism name" value="human"/>
</dbReference>
<dbReference type="EvolutionaryTrace" id="Q8WXH5"/>
<dbReference type="GenomeRNAi" id="122809"/>
<dbReference type="Pharos" id="Q8WXH5">
    <property type="development level" value="Tbio"/>
</dbReference>
<dbReference type="PRO" id="PR:Q8WXH5"/>
<dbReference type="Proteomes" id="UP000005640">
    <property type="component" value="Chromosome 14"/>
</dbReference>
<dbReference type="RNAct" id="Q8WXH5">
    <property type="molecule type" value="protein"/>
</dbReference>
<dbReference type="Bgee" id="ENSG00000180008">
    <property type="expression patterns" value="Expressed in epithelial cell of pancreas and 189 other cell types or tissues"/>
</dbReference>
<dbReference type="ExpressionAtlas" id="Q8WXH5">
    <property type="expression patterns" value="baseline and differential"/>
</dbReference>
<dbReference type="GO" id="GO:0019221">
    <property type="term" value="P:cytokine-mediated signaling pathway"/>
    <property type="evidence" value="ECO:0000318"/>
    <property type="project" value="GO_Central"/>
</dbReference>
<dbReference type="GO" id="GO:0035556">
    <property type="term" value="P:intracellular signal transduction"/>
    <property type="evidence" value="ECO:0007669"/>
    <property type="project" value="InterPro"/>
</dbReference>
<dbReference type="GO" id="GO:0007175">
    <property type="term" value="P:negative regulation of epidermal growth factor-activated receptor activity"/>
    <property type="evidence" value="ECO:0000314"/>
    <property type="project" value="UniProtKB"/>
</dbReference>
<dbReference type="GO" id="GO:0032436">
    <property type="term" value="P:positive regulation of proteasomal ubiquitin-dependent protein catabolic process"/>
    <property type="evidence" value="ECO:0007669"/>
    <property type="project" value="InterPro"/>
</dbReference>
<dbReference type="GO" id="GO:0016567">
    <property type="term" value="P:protein ubiquitination"/>
    <property type="evidence" value="ECO:0007669"/>
    <property type="project" value="UniProtKB-UniPathway"/>
</dbReference>
<dbReference type="CDD" id="cd10385">
    <property type="entry name" value="SH2_SOCS4"/>
    <property type="match status" value="1"/>
</dbReference>
<dbReference type="CDD" id="cd03738">
    <property type="entry name" value="SOCS_SOCS4"/>
    <property type="match status" value="1"/>
</dbReference>
<dbReference type="FunFam" id="3.30.505.10:FF:000028">
    <property type="entry name" value="Suppressor of cytokine signaling 5"/>
    <property type="match status" value="1"/>
</dbReference>
<dbReference type="Gene3D" id="3.30.505.10">
    <property type="entry name" value="SH2 domain"/>
    <property type="match status" value="1"/>
</dbReference>
<dbReference type="InterPro" id="IPR000980">
    <property type="entry name" value="SH2"/>
</dbReference>
<dbReference type="InterPro" id="IPR036860">
    <property type="entry name" value="SH2_dom_sf"/>
</dbReference>
<dbReference type="InterPro" id="IPR022252">
    <property type="entry name" value="SOCS4/SOCS5_dom"/>
</dbReference>
<dbReference type="InterPro" id="IPR035864">
    <property type="entry name" value="SOCS4_SH2"/>
</dbReference>
<dbReference type="InterPro" id="IPR037342">
    <property type="entry name" value="SOCS4_SOCS"/>
</dbReference>
<dbReference type="InterPro" id="IPR001496">
    <property type="entry name" value="SOCS_box"/>
</dbReference>
<dbReference type="InterPro" id="IPR036036">
    <property type="entry name" value="SOCS_box-like_dom_sf"/>
</dbReference>
<dbReference type="PANTHER" id="PTHR10155">
    <property type="entry name" value="PHOSPHATIDYLINOSITOL 3-KINASE REGULATORY SUBUNIT"/>
    <property type="match status" value="1"/>
</dbReference>
<dbReference type="PANTHER" id="PTHR10155:SF21">
    <property type="entry name" value="SUPPRESSOR OF CYTOKINE SIGNALING 4"/>
    <property type="match status" value="1"/>
</dbReference>
<dbReference type="Pfam" id="PF00017">
    <property type="entry name" value="SH2"/>
    <property type="match status" value="1"/>
</dbReference>
<dbReference type="Pfam" id="PF12610">
    <property type="entry name" value="SOCS"/>
    <property type="match status" value="1"/>
</dbReference>
<dbReference type="Pfam" id="PF07525">
    <property type="entry name" value="SOCS_box"/>
    <property type="match status" value="1"/>
</dbReference>
<dbReference type="SMART" id="SM00252">
    <property type="entry name" value="SH2"/>
    <property type="match status" value="1"/>
</dbReference>
<dbReference type="SMART" id="SM00253">
    <property type="entry name" value="SOCS"/>
    <property type="match status" value="1"/>
</dbReference>
<dbReference type="SMART" id="SM00969">
    <property type="entry name" value="SOCS_box"/>
    <property type="match status" value="1"/>
</dbReference>
<dbReference type="SUPFAM" id="SSF55550">
    <property type="entry name" value="SH2 domain"/>
    <property type="match status" value="1"/>
</dbReference>
<dbReference type="SUPFAM" id="SSF158235">
    <property type="entry name" value="SOCS box-like"/>
    <property type="match status" value="1"/>
</dbReference>
<dbReference type="PROSITE" id="PS50001">
    <property type="entry name" value="SH2"/>
    <property type="match status" value="1"/>
</dbReference>
<dbReference type="PROSITE" id="PS50225">
    <property type="entry name" value="SOCS"/>
    <property type="match status" value="1"/>
</dbReference>
<keyword id="KW-0002">3D-structure</keyword>
<keyword id="KW-0341">Growth regulation</keyword>
<keyword id="KW-1267">Proteomics identification</keyword>
<keyword id="KW-1185">Reference proteome</keyword>
<keyword id="KW-0727">SH2 domain</keyword>
<keyword id="KW-0734">Signal transduction inhibitor</keyword>
<keyword id="KW-0833">Ubl conjugation pathway</keyword>
<name>SOCS4_HUMAN</name>
<protein>
    <recommendedName>
        <fullName>Suppressor of cytokine signaling 4</fullName>
        <shortName>SOCS-4</shortName>
    </recommendedName>
    <alternativeName>
        <fullName>Suppressor of cytokine signaling 7</fullName>
        <shortName>SOCS-7</shortName>
    </alternativeName>
</protein>